<accession>A1WC15</accession>
<reference key="1">
    <citation type="submission" date="2006-12" db="EMBL/GenBank/DDBJ databases">
        <title>Complete sequence of chromosome 1 of Acidovorax sp. JS42.</title>
        <authorList>
            <person name="Copeland A."/>
            <person name="Lucas S."/>
            <person name="Lapidus A."/>
            <person name="Barry K."/>
            <person name="Detter J.C."/>
            <person name="Glavina del Rio T."/>
            <person name="Dalin E."/>
            <person name="Tice H."/>
            <person name="Pitluck S."/>
            <person name="Chertkov O."/>
            <person name="Brettin T."/>
            <person name="Bruce D."/>
            <person name="Han C."/>
            <person name="Tapia R."/>
            <person name="Gilna P."/>
            <person name="Schmutz J."/>
            <person name="Larimer F."/>
            <person name="Land M."/>
            <person name="Hauser L."/>
            <person name="Kyrpides N."/>
            <person name="Kim E."/>
            <person name="Stahl D."/>
            <person name="Richardson P."/>
        </authorList>
    </citation>
    <scope>NUCLEOTIDE SEQUENCE [LARGE SCALE GENOMIC DNA]</scope>
    <source>
        <strain>JS42</strain>
    </source>
</reference>
<organism>
    <name type="scientific">Acidovorax sp. (strain JS42)</name>
    <dbReference type="NCBI Taxonomy" id="232721"/>
    <lineage>
        <taxon>Bacteria</taxon>
        <taxon>Pseudomonadati</taxon>
        <taxon>Pseudomonadota</taxon>
        <taxon>Betaproteobacteria</taxon>
        <taxon>Burkholderiales</taxon>
        <taxon>Comamonadaceae</taxon>
        <taxon>Acidovorax</taxon>
    </lineage>
</organism>
<dbReference type="EMBL" id="CP000539">
    <property type="protein sequence ID" value="ABM43790.1"/>
    <property type="molecule type" value="Genomic_DNA"/>
</dbReference>
<dbReference type="SMR" id="A1WC15"/>
<dbReference type="STRING" id="232721.Ajs_3679"/>
<dbReference type="KEGG" id="ajs:Ajs_3679"/>
<dbReference type="eggNOG" id="COG2001">
    <property type="taxonomic scope" value="Bacteria"/>
</dbReference>
<dbReference type="HOGENOM" id="CLU_107907_2_1_4"/>
<dbReference type="Proteomes" id="UP000000645">
    <property type="component" value="Chromosome"/>
</dbReference>
<dbReference type="GO" id="GO:0005737">
    <property type="term" value="C:cytoplasm"/>
    <property type="evidence" value="ECO:0007669"/>
    <property type="project" value="UniProtKB-UniRule"/>
</dbReference>
<dbReference type="GO" id="GO:0009295">
    <property type="term" value="C:nucleoid"/>
    <property type="evidence" value="ECO:0007669"/>
    <property type="project" value="UniProtKB-SubCell"/>
</dbReference>
<dbReference type="GO" id="GO:0003700">
    <property type="term" value="F:DNA-binding transcription factor activity"/>
    <property type="evidence" value="ECO:0007669"/>
    <property type="project" value="UniProtKB-UniRule"/>
</dbReference>
<dbReference type="GO" id="GO:0000976">
    <property type="term" value="F:transcription cis-regulatory region binding"/>
    <property type="evidence" value="ECO:0007669"/>
    <property type="project" value="TreeGrafter"/>
</dbReference>
<dbReference type="GO" id="GO:2000143">
    <property type="term" value="P:negative regulation of DNA-templated transcription initiation"/>
    <property type="evidence" value="ECO:0007669"/>
    <property type="project" value="TreeGrafter"/>
</dbReference>
<dbReference type="CDD" id="cd16321">
    <property type="entry name" value="MraZ_C"/>
    <property type="match status" value="1"/>
</dbReference>
<dbReference type="CDD" id="cd16320">
    <property type="entry name" value="MraZ_N"/>
    <property type="match status" value="1"/>
</dbReference>
<dbReference type="Gene3D" id="3.40.1550.20">
    <property type="entry name" value="Transcriptional regulator MraZ domain"/>
    <property type="match status" value="1"/>
</dbReference>
<dbReference type="HAMAP" id="MF_01008">
    <property type="entry name" value="MraZ"/>
    <property type="match status" value="1"/>
</dbReference>
<dbReference type="InterPro" id="IPR003444">
    <property type="entry name" value="MraZ"/>
</dbReference>
<dbReference type="InterPro" id="IPR035644">
    <property type="entry name" value="MraZ_C"/>
</dbReference>
<dbReference type="InterPro" id="IPR020603">
    <property type="entry name" value="MraZ_dom"/>
</dbReference>
<dbReference type="InterPro" id="IPR035642">
    <property type="entry name" value="MraZ_N"/>
</dbReference>
<dbReference type="InterPro" id="IPR038619">
    <property type="entry name" value="MraZ_sf"/>
</dbReference>
<dbReference type="InterPro" id="IPR007159">
    <property type="entry name" value="SpoVT-AbrB_dom"/>
</dbReference>
<dbReference type="InterPro" id="IPR037914">
    <property type="entry name" value="SpoVT-AbrB_sf"/>
</dbReference>
<dbReference type="NCBIfam" id="TIGR00242">
    <property type="entry name" value="division/cell wall cluster transcriptional repressor MraZ"/>
    <property type="match status" value="1"/>
</dbReference>
<dbReference type="PANTHER" id="PTHR34701">
    <property type="entry name" value="TRANSCRIPTIONAL REGULATOR MRAZ"/>
    <property type="match status" value="1"/>
</dbReference>
<dbReference type="PANTHER" id="PTHR34701:SF1">
    <property type="entry name" value="TRANSCRIPTIONAL REGULATOR MRAZ"/>
    <property type="match status" value="1"/>
</dbReference>
<dbReference type="Pfam" id="PF02381">
    <property type="entry name" value="MraZ"/>
    <property type="match status" value="2"/>
</dbReference>
<dbReference type="SUPFAM" id="SSF89447">
    <property type="entry name" value="AbrB/MazE/MraZ-like"/>
    <property type="match status" value="1"/>
</dbReference>
<dbReference type="PROSITE" id="PS51740">
    <property type="entry name" value="SPOVT_ABRB"/>
    <property type="match status" value="2"/>
</dbReference>
<gene>
    <name evidence="1" type="primary">mraZ</name>
    <name type="ordered locus">Ajs_3679</name>
</gene>
<sequence>MFQGASSLSLDAKGRLSVPTRHRDALTAQAGGQLTLTKHPDGCLMVFPRPEWEKFRERIAQLPMSAQWWKRIFLGNAMDVEMDGTGRVLVSPELREAAGLSKDAILLGMGNHFELWDKATYEAKEAAAMQAEMPDVFKDFSF</sequence>
<feature type="chain" id="PRO_1000062838" description="Transcriptional regulator MraZ">
    <location>
        <begin position="1"/>
        <end position="142"/>
    </location>
</feature>
<feature type="domain" description="SpoVT-AbrB 1" evidence="2">
    <location>
        <begin position="5"/>
        <end position="51"/>
    </location>
</feature>
<feature type="domain" description="SpoVT-AbrB 2" evidence="2">
    <location>
        <begin position="77"/>
        <end position="120"/>
    </location>
</feature>
<keyword id="KW-0963">Cytoplasm</keyword>
<keyword id="KW-0238">DNA-binding</keyword>
<keyword id="KW-0677">Repeat</keyword>
<keyword id="KW-0804">Transcription</keyword>
<keyword id="KW-0805">Transcription regulation</keyword>
<protein>
    <recommendedName>
        <fullName>Transcriptional regulator MraZ</fullName>
    </recommendedName>
</protein>
<evidence type="ECO:0000255" key="1">
    <source>
        <dbReference type="HAMAP-Rule" id="MF_01008"/>
    </source>
</evidence>
<evidence type="ECO:0000255" key="2">
    <source>
        <dbReference type="PROSITE-ProRule" id="PRU01076"/>
    </source>
</evidence>
<proteinExistence type="inferred from homology"/>
<comment type="subunit">
    <text evidence="1">Forms oligomers.</text>
</comment>
<comment type="subcellular location">
    <subcellularLocation>
        <location evidence="1">Cytoplasm</location>
        <location evidence="1">Nucleoid</location>
    </subcellularLocation>
</comment>
<comment type="similarity">
    <text evidence="1">Belongs to the MraZ family.</text>
</comment>
<name>MRAZ_ACISJ</name>